<name>TRUB_METBF</name>
<sequence>MSPAGKLPSEAERILVRKSGAWTNPSYGSYPEKRPILEYIEKGVVNIDKPKGPTSHEVAAWVKAILGVSTAGHAGSLDPKVTGLLPTLLGKATKAVPALRLSGKEYVCLLKLHKEMPQKLVRKVCEEFTGPIYQMPPIKSAVKRVIRIRTIYYLEVLEIEGSFVLFRVGCEAGTYIRKLCHDIGLALGCGGHMQELRRTKAGPFTEETLVTLQDLKDAYVLWKEDGDESEIRRVIMPMETAVSHLPKIILRDSAVDAICSGAALAVPGITSLDANLKKGELIALFTLKGELVALAKAEMSTEELLKASTGLAATSVRIMMEIGTYPKGWTKKEYGVES</sequence>
<reference key="1">
    <citation type="journal article" date="2006" name="J. Bacteriol.">
        <title>The Methanosarcina barkeri genome: comparative analysis with Methanosarcina acetivorans and Methanosarcina mazei reveals extensive rearrangement within methanosarcinal genomes.</title>
        <authorList>
            <person name="Maeder D.L."/>
            <person name="Anderson I."/>
            <person name="Brettin T.S."/>
            <person name="Bruce D.C."/>
            <person name="Gilna P."/>
            <person name="Han C.S."/>
            <person name="Lapidus A."/>
            <person name="Metcalf W.W."/>
            <person name="Saunders E."/>
            <person name="Tapia R."/>
            <person name="Sowers K.R."/>
        </authorList>
    </citation>
    <scope>NUCLEOTIDE SEQUENCE [LARGE SCALE GENOMIC DNA]</scope>
    <source>
        <strain>Fusaro / DSM 804</strain>
    </source>
</reference>
<comment type="function">
    <text evidence="1">Could be responsible for synthesis of pseudouridine from uracil-55 in the psi GC loop of transfer RNAs.</text>
</comment>
<comment type="catalytic activity">
    <reaction evidence="1">
        <text>uridine(55) in tRNA = pseudouridine(55) in tRNA</text>
        <dbReference type="Rhea" id="RHEA:42532"/>
        <dbReference type="Rhea" id="RHEA-COMP:10101"/>
        <dbReference type="Rhea" id="RHEA-COMP:10102"/>
        <dbReference type="ChEBI" id="CHEBI:65314"/>
        <dbReference type="ChEBI" id="CHEBI:65315"/>
        <dbReference type="EC" id="5.4.99.25"/>
    </reaction>
</comment>
<comment type="similarity">
    <text evidence="1">Belongs to the pseudouridine synthase TruB family. Type 2 subfamily.</text>
</comment>
<protein>
    <recommendedName>
        <fullName evidence="1">Probable tRNA pseudouridine synthase B</fullName>
        <ecNumber evidence="1">5.4.99.25</ecNumber>
    </recommendedName>
    <alternativeName>
        <fullName evidence="1">tRNA pseudouridine(55) synthase</fullName>
        <shortName evidence="1">Psi55 synthase</shortName>
    </alternativeName>
    <alternativeName>
        <fullName evidence="1">tRNA pseudouridylate synthase</fullName>
    </alternativeName>
    <alternativeName>
        <fullName evidence="1">tRNA-uridine isomerase</fullName>
    </alternativeName>
</protein>
<proteinExistence type="inferred from homology"/>
<gene>
    <name evidence="1" type="primary">truB</name>
    <name type="ordered locus">Mbar_A0082</name>
</gene>
<feature type="chain" id="PRO_1000084721" description="Probable tRNA pseudouridine synthase B">
    <location>
        <begin position="1"/>
        <end position="338"/>
    </location>
</feature>
<feature type="domain" description="PUA" evidence="1">
    <location>
        <begin position="245"/>
        <end position="320"/>
    </location>
</feature>
<feature type="active site" description="Nucleophile" evidence="1">
    <location>
        <position position="78"/>
    </location>
</feature>
<accession>Q46GC3</accession>
<evidence type="ECO:0000255" key="1">
    <source>
        <dbReference type="HAMAP-Rule" id="MF_01081"/>
    </source>
</evidence>
<keyword id="KW-0413">Isomerase</keyword>
<keyword id="KW-0819">tRNA processing</keyword>
<organism>
    <name type="scientific">Methanosarcina barkeri (strain Fusaro / DSM 804)</name>
    <dbReference type="NCBI Taxonomy" id="269797"/>
    <lineage>
        <taxon>Archaea</taxon>
        <taxon>Methanobacteriati</taxon>
        <taxon>Methanobacteriota</taxon>
        <taxon>Stenosarchaea group</taxon>
        <taxon>Methanomicrobia</taxon>
        <taxon>Methanosarcinales</taxon>
        <taxon>Methanosarcinaceae</taxon>
        <taxon>Methanosarcina</taxon>
    </lineage>
</organism>
<dbReference type="EC" id="5.4.99.25" evidence="1"/>
<dbReference type="EMBL" id="CP000099">
    <property type="protein sequence ID" value="AAZ69069.1"/>
    <property type="molecule type" value="Genomic_DNA"/>
</dbReference>
<dbReference type="SMR" id="Q46GC3"/>
<dbReference type="STRING" id="269797.Mbar_A0082"/>
<dbReference type="PaxDb" id="269797-Mbar_A0082"/>
<dbReference type="KEGG" id="mba:Mbar_A0082"/>
<dbReference type="eggNOG" id="arCOG00987">
    <property type="taxonomic scope" value="Archaea"/>
</dbReference>
<dbReference type="HOGENOM" id="CLU_032087_3_0_2"/>
<dbReference type="OrthoDB" id="35866at2157"/>
<dbReference type="GO" id="GO:0003723">
    <property type="term" value="F:RNA binding"/>
    <property type="evidence" value="ECO:0007669"/>
    <property type="project" value="InterPro"/>
</dbReference>
<dbReference type="GO" id="GO:0160148">
    <property type="term" value="F:tRNA pseudouridine(55) synthase activity"/>
    <property type="evidence" value="ECO:0007669"/>
    <property type="project" value="UniProtKB-EC"/>
</dbReference>
<dbReference type="GO" id="GO:0000495">
    <property type="term" value="P:box H/ACA sno(s)RNA 3'-end processing"/>
    <property type="evidence" value="ECO:0007669"/>
    <property type="project" value="TreeGrafter"/>
</dbReference>
<dbReference type="GO" id="GO:1990481">
    <property type="term" value="P:mRNA pseudouridine synthesis"/>
    <property type="evidence" value="ECO:0007669"/>
    <property type="project" value="TreeGrafter"/>
</dbReference>
<dbReference type="GO" id="GO:0031118">
    <property type="term" value="P:rRNA pseudouridine synthesis"/>
    <property type="evidence" value="ECO:0007669"/>
    <property type="project" value="TreeGrafter"/>
</dbReference>
<dbReference type="GO" id="GO:0031120">
    <property type="term" value="P:snRNA pseudouridine synthesis"/>
    <property type="evidence" value="ECO:0007669"/>
    <property type="project" value="TreeGrafter"/>
</dbReference>
<dbReference type="GO" id="GO:0031119">
    <property type="term" value="P:tRNA pseudouridine synthesis"/>
    <property type="evidence" value="ECO:0007669"/>
    <property type="project" value="UniProtKB-UniRule"/>
</dbReference>
<dbReference type="CDD" id="cd02572">
    <property type="entry name" value="PseudoU_synth_hDyskerin"/>
    <property type="match status" value="1"/>
</dbReference>
<dbReference type="CDD" id="cd21148">
    <property type="entry name" value="PUA_Cbf5"/>
    <property type="match status" value="1"/>
</dbReference>
<dbReference type="FunFam" id="3.30.2350.10:FF:000001">
    <property type="entry name" value="H/ACA ribonucleoprotein complex subunit CBF5"/>
    <property type="match status" value="1"/>
</dbReference>
<dbReference type="Gene3D" id="3.30.2350.10">
    <property type="entry name" value="Pseudouridine synthase"/>
    <property type="match status" value="1"/>
</dbReference>
<dbReference type="Gene3D" id="2.30.130.10">
    <property type="entry name" value="PUA domain"/>
    <property type="match status" value="1"/>
</dbReference>
<dbReference type="HAMAP" id="MF_01081">
    <property type="entry name" value="TruB_arch"/>
    <property type="match status" value="1"/>
</dbReference>
<dbReference type="InterPro" id="IPR012960">
    <property type="entry name" value="Dyskerin-like"/>
</dbReference>
<dbReference type="InterPro" id="IPR020103">
    <property type="entry name" value="PsdUridine_synth_cat_dom_sf"/>
</dbReference>
<dbReference type="InterPro" id="IPR002501">
    <property type="entry name" value="PsdUridine_synth_N"/>
</dbReference>
<dbReference type="InterPro" id="IPR002478">
    <property type="entry name" value="PUA"/>
</dbReference>
<dbReference type="InterPro" id="IPR015947">
    <property type="entry name" value="PUA-like_sf"/>
</dbReference>
<dbReference type="InterPro" id="IPR036974">
    <property type="entry name" value="PUA_sf"/>
</dbReference>
<dbReference type="InterPro" id="IPR004802">
    <property type="entry name" value="tRNA_PsdUridine_synth_B_fam"/>
</dbReference>
<dbReference type="InterPro" id="IPR026326">
    <property type="entry name" value="TruB_arch"/>
</dbReference>
<dbReference type="InterPro" id="IPR032819">
    <property type="entry name" value="TruB_C"/>
</dbReference>
<dbReference type="NCBIfam" id="TIGR00425">
    <property type="entry name" value="CBF5"/>
    <property type="match status" value="1"/>
</dbReference>
<dbReference type="NCBIfam" id="NF003280">
    <property type="entry name" value="PRK04270.1"/>
    <property type="match status" value="1"/>
</dbReference>
<dbReference type="PANTHER" id="PTHR23127">
    <property type="entry name" value="CENTROMERE/MICROTUBULE BINDING PROTEIN CBF5"/>
    <property type="match status" value="1"/>
</dbReference>
<dbReference type="PANTHER" id="PTHR23127:SF0">
    <property type="entry name" value="H_ACA RIBONUCLEOPROTEIN COMPLEX SUBUNIT DKC1"/>
    <property type="match status" value="1"/>
</dbReference>
<dbReference type="Pfam" id="PF08068">
    <property type="entry name" value="DKCLD"/>
    <property type="match status" value="1"/>
</dbReference>
<dbReference type="Pfam" id="PF01472">
    <property type="entry name" value="PUA"/>
    <property type="match status" value="1"/>
</dbReference>
<dbReference type="Pfam" id="PF16198">
    <property type="entry name" value="TruB_C_2"/>
    <property type="match status" value="1"/>
</dbReference>
<dbReference type="Pfam" id="PF01509">
    <property type="entry name" value="TruB_N"/>
    <property type="match status" value="1"/>
</dbReference>
<dbReference type="SMART" id="SM01136">
    <property type="entry name" value="DKCLD"/>
    <property type="match status" value="1"/>
</dbReference>
<dbReference type="SMART" id="SM00359">
    <property type="entry name" value="PUA"/>
    <property type="match status" value="1"/>
</dbReference>
<dbReference type="SUPFAM" id="SSF55120">
    <property type="entry name" value="Pseudouridine synthase"/>
    <property type="match status" value="1"/>
</dbReference>
<dbReference type="SUPFAM" id="SSF88697">
    <property type="entry name" value="PUA domain-like"/>
    <property type="match status" value="1"/>
</dbReference>
<dbReference type="PROSITE" id="PS50890">
    <property type="entry name" value="PUA"/>
    <property type="match status" value="1"/>
</dbReference>